<accession>P62663</accession>
<gene>
    <name type="primary">rpsC</name>
    <name type="synonym">rps3</name>
    <name type="ordered locus">TT_C1322</name>
</gene>
<reference key="1">
    <citation type="journal article" date="2001" name="EMBO J.">
        <title>Crystal structures of complexes of the small ribosomal subunit with tetracycline, edeine and IF3.</title>
        <authorList>
            <person name="Pioletti M."/>
            <person name="Schluenzen F."/>
            <person name="Harms J."/>
            <person name="Zarivach R."/>
            <person name="Gluehmann M."/>
            <person name="Avila H."/>
            <person name="Bashan A."/>
            <person name="Bartels H."/>
            <person name="Auerbach T."/>
            <person name="Jacobi C."/>
            <person name="Hartsch T."/>
            <person name="Yonath A."/>
            <person name="Franceschi F."/>
        </authorList>
    </citation>
    <scope>NUCLEOTIDE SEQUENCE [GENOMIC DNA]</scope>
</reference>
<reference key="2">
    <citation type="journal article" date="2004" name="Nat. Biotechnol.">
        <title>The genome sequence of the extreme thermophile Thermus thermophilus.</title>
        <authorList>
            <person name="Henne A."/>
            <person name="Brueggemann H."/>
            <person name="Raasch C."/>
            <person name="Wiezer A."/>
            <person name="Hartsch T."/>
            <person name="Liesegang H."/>
            <person name="Johann A."/>
            <person name="Lienard T."/>
            <person name="Gohl O."/>
            <person name="Martinez-Arias R."/>
            <person name="Jacobi C."/>
            <person name="Starkuviene V."/>
            <person name="Schlenczeck S."/>
            <person name="Dencker S."/>
            <person name="Huber R."/>
            <person name="Klenk H.-P."/>
            <person name="Kramer W."/>
            <person name="Merkl R."/>
            <person name="Gottschalk G."/>
            <person name="Fritz H.-J."/>
        </authorList>
    </citation>
    <scope>NUCLEOTIDE SEQUENCE [LARGE SCALE GENOMIC DNA]</scope>
    <source>
        <strain>ATCC BAA-163 / DSM 7039 / HB27</strain>
    </source>
</reference>
<organism>
    <name type="scientific">Thermus thermophilus (strain ATCC BAA-163 / DSM 7039 / HB27)</name>
    <dbReference type="NCBI Taxonomy" id="262724"/>
    <lineage>
        <taxon>Bacteria</taxon>
        <taxon>Thermotogati</taxon>
        <taxon>Deinococcota</taxon>
        <taxon>Deinococci</taxon>
        <taxon>Thermales</taxon>
        <taxon>Thermaceae</taxon>
        <taxon>Thermus</taxon>
    </lineage>
</organism>
<protein>
    <recommendedName>
        <fullName evidence="3">Small ribosomal subunit protein uS3</fullName>
    </recommendedName>
    <alternativeName>
        <fullName>30S ribosomal protein S3</fullName>
    </alternativeName>
</protein>
<keyword id="KW-0002">3D-structure</keyword>
<keyword id="KW-0687">Ribonucleoprotein</keyword>
<keyword id="KW-0689">Ribosomal protein</keyword>
<keyword id="KW-0694">RNA-binding</keyword>
<keyword id="KW-0699">rRNA-binding</keyword>
<name>RS3_THET2</name>
<proteinExistence type="evidence at protein level"/>
<evidence type="ECO:0000250" key="1"/>
<evidence type="ECO:0000256" key="2">
    <source>
        <dbReference type="SAM" id="MobiDB-lite"/>
    </source>
</evidence>
<evidence type="ECO:0000305" key="3"/>
<evidence type="ECO:0007829" key="4">
    <source>
        <dbReference type="PDB" id="4V63"/>
    </source>
</evidence>
<evidence type="ECO:0007829" key="5">
    <source>
        <dbReference type="PDB" id="4V67"/>
    </source>
</evidence>
<evidence type="ECO:0007829" key="6">
    <source>
        <dbReference type="PDB" id="4V9L"/>
    </source>
</evidence>
<dbReference type="EMBL" id="AJ409330">
    <property type="protein sequence ID" value="CAC35062.1"/>
    <property type="molecule type" value="Genomic_DNA"/>
</dbReference>
<dbReference type="EMBL" id="AE017221">
    <property type="protein sequence ID" value="AAS81664.1"/>
    <property type="molecule type" value="Genomic_DNA"/>
</dbReference>
<dbReference type="RefSeq" id="WP_008633418.1">
    <property type="nucleotide sequence ID" value="NC_005835.1"/>
</dbReference>
<dbReference type="PDB" id="4KVB">
    <property type="method" value="X-ray"/>
    <property type="resolution" value="4.20 A"/>
    <property type="chains" value="C=1-239"/>
</dbReference>
<dbReference type="PDB" id="4V4I">
    <property type="method" value="X-ray"/>
    <property type="resolution" value="3.71 A"/>
    <property type="chains" value="d=1-239"/>
</dbReference>
<dbReference type="PDB" id="4V4J">
    <property type="method" value="X-ray"/>
    <property type="resolution" value="3.83 A"/>
    <property type="chains" value="d=1-239"/>
</dbReference>
<dbReference type="PDB" id="4V63">
    <property type="method" value="X-ray"/>
    <property type="resolution" value="3.21 A"/>
    <property type="chains" value="AC/CC=1-239"/>
</dbReference>
<dbReference type="PDB" id="4V67">
    <property type="method" value="X-ray"/>
    <property type="resolution" value="3.00 A"/>
    <property type="chains" value="AC/CC=1-239"/>
</dbReference>
<dbReference type="PDB" id="4V7P">
    <property type="method" value="X-ray"/>
    <property type="resolution" value="3.62 A"/>
    <property type="chains" value="AC/DC=2-207"/>
</dbReference>
<dbReference type="PDB" id="4V83">
    <property type="method" value="X-ray"/>
    <property type="resolution" value="3.50 A"/>
    <property type="chains" value="AC/CC=2-207"/>
</dbReference>
<dbReference type="PDB" id="4V84">
    <property type="method" value="X-ray"/>
    <property type="resolution" value="3.40 A"/>
    <property type="chains" value="AC/CC=2-207"/>
</dbReference>
<dbReference type="PDB" id="4V9J">
    <property type="method" value="X-ray"/>
    <property type="resolution" value="3.86 A"/>
    <property type="chains" value="AC/CC=2-208"/>
</dbReference>
<dbReference type="PDB" id="4V9K">
    <property type="method" value="X-ray"/>
    <property type="resolution" value="3.50 A"/>
    <property type="chains" value="AC/CC=2-208"/>
</dbReference>
<dbReference type="PDB" id="4V9L">
    <property type="method" value="X-ray"/>
    <property type="resolution" value="3.50 A"/>
    <property type="chains" value="AC/CC=2-208"/>
</dbReference>
<dbReference type="PDB" id="4V9M">
    <property type="method" value="X-ray"/>
    <property type="resolution" value="4.00 A"/>
    <property type="chains" value="AC/CC=2-208"/>
</dbReference>
<dbReference type="PDB" id="4V9N">
    <property type="method" value="X-ray"/>
    <property type="resolution" value="3.40 A"/>
    <property type="chains" value="AC/CC=2-207"/>
</dbReference>
<dbReference type="PDB" id="4V9Q">
    <property type="method" value="X-ray"/>
    <property type="resolution" value="3.40 A"/>
    <property type="chains" value="BC/DC=2-207"/>
</dbReference>
<dbReference type="PDB" id="4W29">
    <property type="method" value="X-ray"/>
    <property type="resolution" value="3.80 A"/>
    <property type="chains" value="AC/CC=2-208"/>
</dbReference>
<dbReference type="PDB" id="4XEJ">
    <property type="method" value="X-ray"/>
    <property type="resolution" value="3.80 A"/>
    <property type="chains" value="AS03/BS03=2-207"/>
</dbReference>
<dbReference type="PDB" id="5J4D">
    <property type="method" value="X-ray"/>
    <property type="resolution" value="3.10 A"/>
    <property type="chains" value="LA/QC=1-239"/>
</dbReference>
<dbReference type="PDB" id="5V8I">
    <property type="method" value="X-ray"/>
    <property type="resolution" value="3.25 A"/>
    <property type="chains" value="1c/2c=1-239"/>
</dbReference>
<dbReference type="PDB" id="6B4V">
    <property type="method" value="X-ray"/>
    <property type="resolution" value="3.40 A"/>
    <property type="chains" value="LA/PC=1-239"/>
</dbReference>
<dbReference type="PDB" id="6BOH">
    <property type="method" value="X-ray"/>
    <property type="resolution" value="3.40 A"/>
    <property type="chains" value="MA/RC=1-239"/>
</dbReference>
<dbReference type="PDB" id="6BOK">
    <property type="method" value="X-ray"/>
    <property type="resolution" value="3.55 A"/>
    <property type="chains" value="KA/NC=1-239"/>
</dbReference>
<dbReference type="PDB" id="6N1D">
    <property type="method" value="X-ray"/>
    <property type="resolution" value="3.20 A"/>
    <property type="chains" value="AS03/BS03=2-239"/>
</dbReference>
<dbReference type="PDBsum" id="4KVB"/>
<dbReference type="PDBsum" id="4V4I"/>
<dbReference type="PDBsum" id="4V4J"/>
<dbReference type="PDBsum" id="4V63"/>
<dbReference type="PDBsum" id="4V67"/>
<dbReference type="PDBsum" id="4V7P"/>
<dbReference type="PDBsum" id="4V83"/>
<dbReference type="PDBsum" id="4V84"/>
<dbReference type="PDBsum" id="4V9J"/>
<dbReference type="PDBsum" id="4V9K"/>
<dbReference type="PDBsum" id="4V9L"/>
<dbReference type="PDBsum" id="4V9M"/>
<dbReference type="PDBsum" id="4V9N"/>
<dbReference type="PDBsum" id="4V9Q"/>
<dbReference type="PDBsum" id="4W29"/>
<dbReference type="PDBsum" id="4XEJ"/>
<dbReference type="PDBsum" id="5J4D"/>
<dbReference type="PDBsum" id="5V8I"/>
<dbReference type="PDBsum" id="6B4V"/>
<dbReference type="PDBsum" id="6BOH"/>
<dbReference type="PDBsum" id="6BOK"/>
<dbReference type="PDBsum" id="6N1D"/>
<dbReference type="SMR" id="P62663"/>
<dbReference type="IntAct" id="P62663">
    <property type="interactions" value="4"/>
</dbReference>
<dbReference type="DrugBank" id="DB08185">
    <property type="generic name" value="2-METHYLTHIO-N6-ISOPENTENYL-ADENOSINE-5'-MONOPHOSPHATE"/>
</dbReference>
<dbReference type="GeneID" id="3168725"/>
<dbReference type="KEGG" id="tth:TT_C1322"/>
<dbReference type="eggNOG" id="COG0092">
    <property type="taxonomic scope" value="Bacteria"/>
</dbReference>
<dbReference type="HOGENOM" id="CLU_058591_0_2_0"/>
<dbReference type="OrthoDB" id="9806396at2"/>
<dbReference type="EvolutionaryTrace" id="P62663"/>
<dbReference type="Proteomes" id="UP000000592">
    <property type="component" value="Chromosome"/>
</dbReference>
<dbReference type="GO" id="GO:0022627">
    <property type="term" value="C:cytosolic small ribosomal subunit"/>
    <property type="evidence" value="ECO:0007669"/>
    <property type="project" value="TreeGrafter"/>
</dbReference>
<dbReference type="GO" id="GO:0003729">
    <property type="term" value="F:mRNA binding"/>
    <property type="evidence" value="ECO:0007669"/>
    <property type="project" value="UniProtKB-UniRule"/>
</dbReference>
<dbReference type="GO" id="GO:0019843">
    <property type="term" value="F:rRNA binding"/>
    <property type="evidence" value="ECO:0007669"/>
    <property type="project" value="UniProtKB-UniRule"/>
</dbReference>
<dbReference type="GO" id="GO:0003735">
    <property type="term" value="F:structural constituent of ribosome"/>
    <property type="evidence" value="ECO:0007669"/>
    <property type="project" value="InterPro"/>
</dbReference>
<dbReference type="GO" id="GO:0006412">
    <property type="term" value="P:translation"/>
    <property type="evidence" value="ECO:0007669"/>
    <property type="project" value="UniProtKB-UniRule"/>
</dbReference>
<dbReference type="CDD" id="cd02412">
    <property type="entry name" value="KH-II_30S_S3"/>
    <property type="match status" value="1"/>
</dbReference>
<dbReference type="FunFam" id="3.30.300.20:FF:000001">
    <property type="entry name" value="30S ribosomal protein S3"/>
    <property type="match status" value="1"/>
</dbReference>
<dbReference type="Gene3D" id="3.30.300.20">
    <property type="match status" value="1"/>
</dbReference>
<dbReference type="Gene3D" id="3.30.1140.32">
    <property type="entry name" value="Ribosomal protein S3, C-terminal domain"/>
    <property type="match status" value="1"/>
</dbReference>
<dbReference type="HAMAP" id="MF_01309_B">
    <property type="entry name" value="Ribosomal_uS3_B"/>
    <property type="match status" value="1"/>
</dbReference>
<dbReference type="InterPro" id="IPR004087">
    <property type="entry name" value="KH_dom"/>
</dbReference>
<dbReference type="InterPro" id="IPR015946">
    <property type="entry name" value="KH_dom-like_a/b"/>
</dbReference>
<dbReference type="InterPro" id="IPR004044">
    <property type="entry name" value="KH_dom_type_2"/>
</dbReference>
<dbReference type="InterPro" id="IPR009019">
    <property type="entry name" value="KH_sf_prok-type"/>
</dbReference>
<dbReference type="InterPro" id="IPR036419">
    <property type="entry name" value="Ribosomal_S3_C_sf"/>
</dbReference>
<dbReference type="InterPro" id="IPR005704">
    <property type="entry name" value="Ribosomal_uS3_bac-typ"/>
</dbReference>
<dbReference type="InterPro" id="IPR001351">
    <property type="entry name" value="Ribosomal_uS3_C"/>
</dbReference>
<dbReference type="InterPro" id="IPR018280">
    <property type="entry name" value="Ribosomal_uS3_CS"/>
</dbReference>
<dbReference type="NCBIfam" id="TIGR01009">
    <property type="entry name" value="rpsC_bact"/>
    <property type="match status" value="1"/>
</dbReference>
<dbReference type="PANTHER" id="PTHR11760">
    <property type="entry name" value="30S/40S RIBOSOMAL PROTEIN S3"/>
    <property type="match status" value="1"/>
</dbReference>
<dbReference type="PANTHER" id="PTHR11760:SF19">
    <property type="entry name" value="SMALL RIBOSOMAL SUBUNIT PROTEIN US3C"/>
    <property type="match status" value="1"/>
</dbReference>
<dbReference type="Pfam" id="PF07650">
    <property type="entry name" value="KH_2"/>
    <property type="match status" value="1"/>
</dbReference>
<dbReference type="Pfam" id="PF00189">
    <property type="entry name" value="Ribosomal_S3_C"/>
    <property type="match status" value="1"/>
</dbReference>
<dbReference type="SMART" id="SM00322">
    <property type="entry name" value="KH"/>
    <property type="match status" value="1"/>
</dbReference>
<dbReference type="SUPFAM" id="SSF54814">
    <property type="entry name" value="Prokaryotic type KH domain (KH-domain type II)"/>
    <property type="match status" value="1"/>
</dbReference>
<dbReference type="SUPFAM" id="SSF54821">
    <property type="entry name" value="Ribosomal protein S3 C-terminal domain"/>
    <property type="match status" value="1"/>
</dbReference>
<dbReference type="PROSITE" id="PS50823">
    <property type="entry name" value="KH_TYPE_2"/>
    <property type="match status" value="1"/>
</dbReference>
<dbReference type="PROSITE" id="PS00548">
    <property type="entry name" value="RIBOSOMAL_S3"/>
    <property type="match status" value="1"/>
</dbReference>
<sequence>MGNKIHPIGFRLGITRDWESRWYAGKKQYRHLLLEDQRIRGLLEKELYSAGLARVDIERAADNVAVTVHVAKPGVVIGRGGERIRVLREELAKLTGKNVALNVQEVQNPNLSAPLVAQRVAEQIERRFAVRRAIKQAVQRVMESGAKGAKVIVSGRIGGAEQARTEWAAQGRVPLHTLRANIDYGFALARTTYGVLGVKAYIFLGEVIGGQKPKARPELPKAEERPRRRRPAVRVKKEE</sequence>
<comment type="function">
    <text evidence="1">Binds the lower part of the 30S subunit head. Binds mRNA in the 70S ribosome, positioning it for translation (By similarity).</text>
</comment>
<comment type="subunit">
    <text evidence="1">Part of the 30S ribosomal subunit. Forms a tight complex with proteins S10 and S14 (By similarity).</text>
</comment>
<comment type="similarity">
    <text evidence="3">Belongs to the universal ribosomal protein uS3 family.</text>
</comment>
<feature type="initiator methionine" description="Removed" evidence="1">
    <location>
        <position position="1"/>
    </location>
</feature>
<feature type="chain" id="PRO_0000130222" description="Small ribosomal subunit protein uS3">
    <location>
        <begin position="2"/>
        <end position="239"/>
    </location>
</feature>
<feature type="domain" description="KH type-2">
    <location>
        <begin position="40"/>
        <end position="108"/>
    </location>
</feature>
<feature type="region of interest" description="Disordered" evidence="2">
    <location>
        <begin position="212"/>
        <end position="239"/>
    </location>
</feature>
<feature type="compositionally biased region" description="Basic and acidic residues" evidence="2">
    <location>
        <begin position="215"/>
        <end position="226"/>
    </location>
</feature>
<feature type="compositionally biased region" description="Basic residues" evidence="2">
    <location>
        <begin position="227"/>
        <end position="239"/>
    </location>
</feature>
<feature type="helix" evidence="5">
    <location>
        <begin position="7"/>
        <end position="10"/>
    </location>
</feature>
<feature type="turn" evidence="5">
    <location>
        <begin position="11"/>
        <end position="15"/>
    </location>
</feature>
<feature type="strand" evidence="4">
    <location>
        <begin position="19"/>
        <end position="22"/>
    </location>
</feature>
<feature type="turn" evidence="5">
    <location>
        <begin position="26"/>
        <end position="28"/>
    </location>
</feature>
<feature type="helix" evidence="5">
    <location>
        <begin position="29"/>
        <end position="45"/>
    </location>
</feature>
<feature type="helix" evidence="5">
    <location>
        <begin position="48"/>
        <end position="50"/>
    </location>
</feature>
<feature type="strand" evidence="5">
    <location>
        <begin position="52"/>
        <end position="55"/>
    </location>
</feature>
<feature type="strand" evidence="5">
    <location>
        <begin position="57"/>
        <end position="65"/>
    </location>
</feature>
<feature type="strand" evidence="5">
    <location>
        <begin position="68"/>
        <end position="71"/>
    </location>
</feature>
<feature type="helix" evidence="5">
    <location>
        <begin position="74"/>
        <end position="77"/>
    </location>
</feature>
<feature type="turn" evidence="5">
    <location>
        <begin position="78"/>
        <end position="81"/>
    </location>
</feature>
<feature type="helix" evidence="5">
    <location>
        <begin position="83"/>
        <end position="92"/>
    </location>
</feature>
<feature type="strand" evidence="5">
    <location>
        <begin position="95"/>
        <end position="98"/>
    </location>
</feature>
<feature type="strand" evidence="6">
    <location>
        <begin position="101"/>
        <end position="105"/>
    </location>
</feature>
<feature type="helix" evidence="5">
    <location>
        <begin position="109"/>
        <end position="111"/>
    </location>
</feature>
<feature type="helix" evidence="5">
    <location>
        <begin position="113"/>
        <end position="125"/>
    </location>
</feature>
<feature type="helix" evidence="5">
    <location>
        <begin position="130"/>
        <end position="143"/>
    </location>
</feature>
<feature type="strand" evidence="5">
    <location>
        <begin position="147"/>
        <end position="155"/>
    </location>
</feature>
<feature type="helix" evidence="5">
    <location>
        <begin position="157"/>
        <end position="159"/>
    </location>
</feature>
<feature type="strand" evidence="5">
    <location>
        <begin position="164"/>
        <end position="166"/>
    </location>
</feature>
<feature type="strand" evidence="5">
    <location>
        <begin position="169"/>
        <end position="171"/>
    </location>
</feature>
<feature type="strand" evidence="6">
    <location>
        <begin position="175"/>
        <end position="178"/>
    </location>
</feature>
<feature type="strand" evidence="5">
    <location>
        <begin position="182"/>
        <end position="187"/>
    </location>
</feature>
<feature type="strand" evidence="5">
    <location>
        <begin position="196"/>
        <end position="203"/>
    </location>
</feature>